<dbReference type="EC" id="7.1.1.-" evidence="1"/>
<dbReference type="EMBL" id="AP004638">
    <property type="protein sequence ID" value="BAB84274.1"/>
    <property type="status" value="ALT_INIT"/>
    <property type="molecule type" value="Genomic_DNA"/>
</dbReference>
<dbReference type="RefSeq" id="NP_569685.2">
    <property type="nucleotide sequence ID" value="NC_003386.1"/>
</dbReference>
<dbReference type="SMR" id="Q8WHX8"/>
<dbReference type="GeneID" id="2545118"/>
<dbReference type="GO" id="GO:0009535">
    <property type="term" value="C:chloroplast thylakoid membrane"/>
    <property type="evidence" value="ECO:0007669"/>
    <property type="project" value="UniProtKB-SubCell"/>
</dbReference>
<dbReference type="GO" id="GO:0008137">
    <property type="term" value="F:NADH dehydrogenase (ubiquinone) activity"/>
    <property type="evidence" value="ECO:0007669"/>
    <property type="project" value="InterPro"/>
</dbReference>
<dbReference type="GO" id="GO:0048039">
    <property type="term" value="F:ubiquinone binding"/>
    <property type="evidence" value="ECO:0007669"/>
    <property type="project" value="TreeGrafter"/>
</dbReference>
<dbReference type="GO" id="GO:0042773">
    <property type="term" value="P:ATP synthesis coupled electron transport"/>
    <property type="evidence" value="ECO:0007669"/>
    <property type="project" value="InterPro"/>
</dbReference>
<dbReference type="GO" id="GO:0015990">
    <property type="term" value="P:electron transport coupled proton transport"/>
    <property type="evidence" value="ECO:0007669"/>
    <property type="project" value="TreeGrafter"/>
</dbReference>
<dbReference type="HAMAP" id="MF_00491">
    <property type="entry name" value="NDH1_NuoM"/>
    <property type="match status" value="1"/>
</dbReference>
<dbReference type="InterPro" id="IPR022997">
    <property type="entry name" value="NADH_Q_OxRdtase_chain4"/>
</dbReference>
<dbReference type="InterPro" id="IPR010227">
    <property type="entry name" value="NADH_Q_OxRdtase_chainM/4"/>
</dbReference>
<dbReference type="InterPro" id="IPR003918">
    <property type="entry name" value="NADH_UbQ_OxRdtase"/>
</dbReference>
<dbReference type="InterPro" id="IPR001750">
    <property type="entry name" value="ND/Mrp_TM"/>
</dbReference>
<dbReference type="NCBIfam" id="TIGR01972">
    <property type="entry name" value="NDH_I_M"/>
    <property type="match status" value="1"/>
</dbReference>
<dbReference type="NCBIfam" id="NF009212">
    <property type="entry name" value="PRK12561.1"/>
    <property type="match status" value="1"/>
</dbReference>
<dbReference type="PANTHER" id="PTHR43507:SF21">
    <property type="entry name" value="NAD(P)H-QUINONE OXIDOREDUCTASE CHAIN 4, CHLOROPLASTIC"/>
    <property type="match status" value="1"/>
</dbReference>
<dbReference type="PANTHER" id="PTHR43507">
    <property type="entry name" value="NADH-UBIQUINONE OXIDOREDUCTASE CHAIN 4"/>
    <property type="match status" value="1"/>
</dbReference>
<dbReference type="Pfam" id="PF00361">
    <property type="entry name" value="Proton_antipo_M"/>
    <property type="match status" value="1"/>
</dbReference>
<dbReference type="PRINTS" id="PR01437">
    <property type="entry name" value="NUOXDRDTASE4"/>
</dbReference>
<name>NU4C_PSINU</name>
<gene>
    <name evidence="1" type="primary">ndhD</name>
</gene>
<accession>Q8WHX8</accession>
<proteinExistence type="inferred from homology"/>
<comment type="catalytic activity">
    <reaction evidence="1">
        <text>a plastoquinone + NADH + (n+1) H(+)(in) = a plastoquinol + NAD(+) + n H(+)(out)</text>
        <dbReference type="Rhea" id="RHEA:42608"/>
        <dbReference type="Rhea" id="RHEA-COMP:9561"/>
        <dbReference type="Rhea" id="RHEA-COMP:9562"/>
        <dbReference type="ChEBI" id="CHEBI:15378"/>
        <dbReference type="ChEBI" id="CHEBI:17757"/>
        <dbReference type="ChEBI" id="CHEBI:57540"/>
        <dbReference type="ChEBI" id="CHEBI:57945"/>
        <dbReference type="ChEBI" id="CHEBI:62192"/>
    </reaction>
</comment>
<comment type="catalytic activity">
    <reaction evidence="1">
        <text>a plastoquinone + NADPH + (n+1) H(+)(in) = a plastoquinol + NADP(+) + n H(+)(out)</text>
        <dbReference type="Rhea" id="RHEA:42612"/>
        <dbReference type="Rhea" id="RHEA-COMP:9561"/>
        <dbReference type="Rhea" id="RHEA-COMP:9562"/>
        <dbReference type="ChEBI" id="CHEBI:15378"/>
        <dbReference type="ChEBI" id="CHEBI:17757"/>
        <dbReference type="ChEBI" id="CHEBI:57783"/>
        <dbReference type="ChEBI" id="CHEBI:58349"/>
        <dbReference type="ChEBI" id="CHEBI:62192"/>
    </reaction>
</comment>
<comment type="subcellular location">
    <subcellularLocation>
        <location evidence="1">Plastid</location>
        <location evidence="1">Chloroplast thylakoid membrane</location>
        <topology evidence="1">Multi-pass membrane protein</topology>
    </subcellularLocation>
</comment>
<comment type="similarity">
    <text evidence="1">Belongs to the complex I subunit 4 family.</text>
</comment>
<comment type="sequence caution" evidence="2">
    <conflict type="erroneous initiation">
        <sequence resource="EMBL-CDS" id="BAB84274"/>
    </conflict>
</comment>
<protein>
    <recommendedName>
        <fullName evidence="1">NAD(P)H-quinone oxidoreductase chain 4, chloroplastic</fullName>
        <ecNumber evidence="1">7.1.1.-</ecNumber>
    </recommendedName>
    <alternativeName>
        <fullName evidence="1">NAD(P)H dehydrogenase, chain 4</fullName>
    </alternativeName>
    <alternativeName>
        <fullName evidence="1">NADH-plastoquinone oxidoreductase chain 4</fullName>
    </alternativeName>
</protein>
<sequence>MSNLPWLTLIVLFPFSASFLIPLLPYKGNKVVRWYTLGICALEFLLITFTFCCQFHLSDPSIQLKEDYNWISFLYFHWNLGVDGLSMGLILLTGFITTLAILAAWPVTRNVRLFYFLMLAMYSGQIGLFASQNILLFFFMWELELIPVYLLLSMWGGKKRLYSSTKFLLYTAGGSIFLLVGSLTMGLYGSNGTSFDLQILTNRSYPIAVETALYFSFLIAYAVKLPILPFHTWLPDTHGEAHYSTCMLLAGILLKMGGYGLIRINMELLPHAHFLFSPLLVTMGAVQIAYASLISFSLPNIKRRIAYSSVSHMGFVIIGISSITDIGTNGAILQMISHGLIGAALFFLAGISYDRTQTLYLDQLGGIAVPMPRLFTMFSFFSLASLALPGMSSFVAEFLIFLGIVTNPYYSLIFKSIILFIGAIGVILTPIYLLSMLRKMFYGFKIYQNSLFFIDLGPREIFISVFILLPILGIGIYPNLVLSLWNEKVESILLQYYG</sequence>
<evidence type="ECO:0000255" key="1">
    <source>
        <dbReference type="HAMAP-Rule" id="MF_00491"/>
    </source>
</evidence>
<evidence type="ECO:0000305" key="2"/>
<organism>
    <name type="scientific">Psilotum nudum</name>
    <name type="common">Whisk fern</name>
    <name type="synonym">Lycopodium nudum</name>
    <dbReference type="NCBI Taxonomy" id="3240"/>
    <lineage>
        <taxon>Eukaryota</taxon>
        <taxon>Viridiplantae</taxon>
        <taxon>Streptophyta</taxon>
        <taxon>Embryophyta</taxon>
        <taxon>Tracheophyta</taxon>
        <taxon>Polypodiopsida</taxon>
        <taxon>Ophioglossidae</taxon>
        <taxon>Psilotales</taxon>
        <taxon>Psilotaceae</taxon>
        <taxon>Psilotum</taxon>
    </lineage>
</organism>
<geneLocation type="chloroplast"/>
<feature type="chain" id="PRO_0000118027" description="NAD(P)H-quinone oxidoreductase chain 4, chloroplastic">
    <location>
        <begin position="1"/>
        <end position="498"/>
    </location>
</feature>
<feature type="transmembrane region" description="Helical" evidence="1">
    <location>
        <begin position="4"/>
        <end position="24"/>
    </location>
</feature>
<feature type="transmembrane region" description="Helical" evidence="1">
    <location>
        <begin position="37"/>
        <end position="57"/>
    </location>
</feature>
<feature type="transmembrane region" description="Helical" evidence="1">
    <location>
        <begin position="87"/>
        <end position="107"/>
    </location>
</feature>
<feature type="transmembrane region" description="Helical" evidence="1">
    <location>
        <begin position="111"/>
        <end position="131"/>
    </location>
</feature>
<feature type="transmembrane region" description="Helical" evidence="1">
    <location>
        <begin position="134"/>
        <end position="154"/>
    </location>
</feature>
<feature type="transmembrane region" description="Helical" evidence="1">
    <location>
        <begin position="167"/>
        <end position="187"/>
    </location>
</feature>
<feature type="transmembrane region" description="Helical" evidence="1">
    <location>
        <begin position="207"/>
        <end position="227"/>
    </location>
</feature>
<feature type="transmembrane region" description="Helical" evidence="1">
    <location>
        <begin position="242"/>
        <end position="262"/>
    </location>
</feature>
<feature type="transmembrane region" description="Helical" evidence="1">
    <location>
        <begin position="274"/>
        <end position="294"/>
    </location>
</feature>
<feature type="transmembrane region" description="Helical" evidence="1">
    <location>
        <begin position="305"/>
        <end position="325"/>
    </location>
</feature>
<feature type="transmembrane region" description="Helical" evidence="1">
    <location>
        <begin position="331"/>
        <end position="351"/>
    </location>
</feature>
<feature type="transmembrane region" description="Helical" evidence="1">
    <location>
        <begin position="386"/>
        <end position="406"/>
    </location>
</feature>
<feature type="transmembrane region" description="Helical" evidence="1">
    <location>
        <begin position="417"/>
        <end position="437"/>
    </location>
</feature>
<feature type="transmembrane region" description="Helical" evidence="1">
    <location>
        <begin position="461"/>
        <end position="481"/>
    </location>
</feature>
<keyword id="KW-0150">Chloroplast</keyword>
<keyword id="KW-0472">Membrane</keyword>
<keyword id="KW-0520">NAD</keyword>
<keyword id="KW-0521">NADP</keyword>
<keyword id="KW-0934">Plastid</keyword>
<keyword id="KW-0618">Plastoquinone</keyword>
<keyword id="KW-0874">Quinone</keyword>
<keyword id="KW-0793">Thylakoid</keyword>
<keyword id="KW-1278">Translocase</keyword>
<keyword id="KW-0812">Transmembrane</keyword>
<keyword id="KW-1133">Transmembrane helix</keyword>
<reference key="1">
    <citation type="journal article" date="2004" name="Mol. Biol. Evol.">
        <title>Chloroplast phylogeny indicates that bryophytes are monophyletic.</title>
        <authorList>
            <person name="Nishiyama T."/>
            <person name="Wolf P.G."/>
            <person name="Kugita M."/>
            <person name="Sinclair R.B."/>
            <person name="Sugita M."/>
            <person name="Sugiura C."/>
            <person name="Wakasugi T."/>
            <person name="Yamada K."/>
            <person name="Yoshinaga K."/>
            <person name="Yamaguchi K."/>
            <person name="Ueda K."/>
            <person name="Hasebe M."/>
        </authorList>
    </citation>
    <scope>NUCLEOTIDE SEQUENCE [LARGE SCALE GENOMIC DNA]</scope>
    <source>
        <strain>Kingyoku</strain>
    </source>
</reference>